<dbReference type="EMBL" id="CP000305">
    <property type="protein sequence ID" value="ABG19815.1"/>
    <property type="molecule type" value="Genomic_DNA"/>
</dbReference>
<dbReference type="EMBL" id="ACNQ01000019">
    <property type="protein sequence ID" value="EEO74365.1"/>
    <property type="molecule type" value="Genomic_DNA"/>
</dbReference>
<dbReference type="RefSeq" id="WP_002210093.1">
    <property type="nucleotide sequence ID" value="NZ_ACNQ01000019.1"/>
</dbReference>
<dbReference type="GeneID" id="57975109"/>
<dbReference type="KEGG" id="ypn:YPN_3488"/>
<dbReference type="HOGENOM" id="CLU_188292_0_0_6"/>
<dbReference type="Proteomes" id="UP000008936">
    <property type="component" value="Chromosome"/>
</dbReference>
<dbReference type="GO" id="GO:0005886">
    <property type="term" value="C:plasma membrane"/>
    <property type="evidence" value="ECO:0007669"/>
    <property type="project" value="UniProtKB-SubCell"/>
</dbReference>
<dbReference type="HAMAP" id="MF_01546">
    <property type="entry name" value="AaeX"/>
    <property type="match status" value="1"/>
</dbReference>
<dbReference type="InterPro" id="IPR012451">
    <property type="entry name" value="DUF1656"/>
</dbReference>
<dbReference type="NCBIfam" id="NF008615">
    <property type="entry name" value="PRK11594.1"/>
    <property type="match status" value="1"/>
</dbReference>
<dbReference type="Pfam" id="PF07869">
    <property type="entry name" value="DUF1656"/>
    <property type="match status" value="1"/>
</dbReference>
<protein>
    <recommendedName>
        <fullName evidence="1">Protein AaeX</fullName>
    </recommendedName>
</protein>
<name>AAEX_YERPN</name>
<keyword id="KW-1003">Cell membrane</keyword>
<keyword id="KW-0472">Membrane</keyword>
<keyword id="KW-0812">Transmembrane</keyword>
<keyword id="KW-1133">Transmembrane helix</keyword>
<gene>
    <name evidence="1" type="primary">aaeX</name>
    <name type="ordered locus">YPN_3488</name>
    <name type="ORF">YP516_3961</name>
</gene>
<evidence type="ECO:0000255" key="1">
    <source>
        <dbReference type="HAMAP-Rule" id="MF_01546"/>
    </source>
</evidence>
<accession>Q1CDW5</accession>
<accession>D1Q1G2</accession>
<organism>
    <name type="scientific">Yersinia pestis bv. Antiqua (strain Nepal516)</name>
    <dbReference type="NCBI Taxonomy" id="377628"/>
    <lineage>
        <taxon>Bacteria</taxon>
        <taxon>Pseudomonadati</taxon>
        <taxon>Pseudomonadota</taxon>
        <taxon>Gammaproteobacteria</taxon>
        <taxon>Enterobacterales</taxon>
        <taxon>Yersiniaceae</taxon>
        <taxon>Yersinia</taxon>
    </lineage>
</organism>
<proteinExistence type="inferred from homology"/>
<sequence length="67" mass="7790">MSLLPVMVIFGLSFPPIFLELLISLALFFVVRRILQPTGIYEFVWHPALFNTALYCCLFYLTSRLFS</sequence>
<feature type="chain" id="PRO_0000300583" description="Protein AaeX">
    <location>
        <begin position="1"/>
        <end position="67"/>
    </location>
</feature>
<feature type="transmembrane region" description="Helical" evidence="1">
    <location>
        <begin position="3"/>
        <end position="23"/>
    </location>
</feature>
<feature type="transmembrane region" description="Helical" evidence="1">
    <location>
        <begin position="39"/>
        <end position="59"/>
    </location>
</feature>
<reference key="1">
    <citation type="journal article" date="2006" name="J. Bacteriol.">
        <title>Complete genome sequence of Yersinia pestis strains Antiqua and Nepal516: evidence of gene reduction in an emerging pathogen.</title>
        <authorList>
            <person name="Chain P.S.G."/>
            <person name="Hu P."/>
            <person name="Malfatti S.A."/>
            <person name="Radnedge L."/>
            <person name="Larimer F."/>
            <person name="Vergez L.M."/>
            <person name="Worsham P."/>
            <person name="Chu M.C."/>
            <person name="Andersen G.L."/>
        </authorList>
    </citation>
    <scope>NUCLEOTIDE SEQUENCE [LARGE SCALE GENOMIC DNA]</scope>
    <source>
        <strain>Nepal516</strain>
    </source>
</reference>
<reference key="2">
    <citation type="submission" date="2009-04" db="EMBL/GenBank/DDBJ databases">
        <title>Yersinia pestis Nepal516A whole genome shotgun sequencing project.</title>
        <authorList>
            <person name="Plunkett G. III"/>
            <person name="Anderson B.D."/>
            <person name="Baumler D.J."/>
            <person name="Burland V."/>
            <person name="Cabot E.L."/>
            <person name="Glasner J.D."/>
            <person name="Mau B."/>
            <person name="Neeno-Eckwall E."/>
            <person name="Perna N.T."/>
            <person name="Munk A.C."/>
            <person name="Tapia R."/>
            <person name="Green L.D."/>
            <person name="Rogers Y.C."/>
            <person name="Detter J.C."/>
            <person name="Bruce D.C."/>
            <person name="Brettin T.S."/>
        </authorList>
    </citation>
    <scope>NUCLEOTIDE SEQUENCE [LARGE SCALE GENOMIC DNA]</scope>
    <source>
        <strain>Nepal516</strain>
    </source>
</reference>
<comment type="subcellular location">
    <subcellularLocation>
        <location evidence="1">Cell membrane</location>
        <topology evidence="1">Multi-pass membrane protein</topology>
    </subcellularLocation>
</comment>
<comment type="similarity">
    <text evidence="1">Belongs to the AaeX family.</text>
</comment>